<sequence>MATWLAIIFIVAALILGLIGGFLLARKYMMDYLKKNPPINEEMLRMMMMQMGQKPSQKKINQMMTMMNKNMDQNMKSAKK</sequence>
<feature type="chain" id="PRO_0000214978" description="UPF0154 protein MW1230">
    <location>
        <begin position="1"/>
        <end position="80"/>
    </location>
</feature>
<feature type="transmembrane region" description="Helical" evidence="1">
    <location>
        <begin position="4"/>
        <end position="24"/>
    </location>
</feature>
<comment type="subcellular location">
    <subcellularLocation>
        <location evidence="1">Membrane</location>
        <topology evidence="1">Single-pass membrane protein</topology>
    </subcellularLocation>
</comment>
<comment type="similarity">
    <text evidence="1">Belongs to the UPF0154 family.</text>
</comment>
<name>Y1230_STAAW</name>
<dbReference type="EMBL" id="BA000033">
    <property type="protein sequence ID" value="BAB95095.1"/>
    <property type="molecule type" value="Genomic_DNA"/>
</dbReference>
<dbReference type="RefSeq" id="WP_000246909.1">
    <property type="nucleotide sequence ID" value="NC_003923.1"/>
</dbReference>
<dbReference type="SMR" id="P67292"/>
<dbReference type="KEGG" id="sam:MW1230"/>
<dbReference type="HOGENOM" id="CLU_180108_0_1_9"/>
<dbReference type="GO" id="GO:0005886">
    <property type="term" value="C:plasma membrane"/>
    <property type="evidence" value="ECO:0007669"/>
    <property type="project" value="UniProtKB-UniRule"/>
</dbReference>
<dbReference type="Gene3D" id="1.10.238.10">
    <property type="entry name" value="EF-hand"/>
    <property type="match status" value="1"/>
</dbReference>
<dbReference type="HAMAP" id="MF_00363">
    <property type="entry name" value="UPF0154"/>
    <property type="match status" value="1"/>
</dbReference>
<dbReference type="InterPro" id="IPR011992">
    <property type="entry name" value="EF-hand-dom_pair"/>
</dbReference>
<dbReference type="InterPro" id="IPR005359">
    <property type="entry name" value="UPF0154"/>
</dbReference>
<dbReference type="Pfam" id="PF03672">
    <property type="entry name" value="UPF0154"/>
    <property type="match status" value="1"/>
</dbReference>
<dbReference type="SUPFAM" id="SSF47473">
    <property type="entry name" value="EF-hand"/>
    <property type="match status" value="1"/>
</dbReference>
<proteinExistence type="inferred from homology"/>
<keyword id="KW-0472">Membrane</keyword>
<keyword id="KW-0812">Transmembrane</keyword>
<keyword id="KW-1133">Transmembrane helix</keyword>
<organism>
    <name type="scientific">Staphylococcus aureus (strain MW2)</name>
    <dbReference type="NCBI Taxonomy" id="196620"/>
    <lineage>
        <taxon>Bacteria</taxon>
        <taxon>Bacillati</taxon>
        <taxon>Bacillota</taxon>
        <taxon>Bacilli</taxon>
        <taxon>Bacillales</taxon>
        <taxon>Staphylococcaceae</taxon>
        <taxon>Staphylococcus</taxon>
    </lineage>
</organism>
<evidence type="ECO:0000255" key="1">
    <source>
        <dbReference type="HAMAP-Rule" id="MF_00363"/>
    </source>
</evidence>
<reference key="1">
    <citation type="journal article" date="2002" name="Lancet">
        <title>Genome and virulence determinants of high virulence community-acquired MRSA.</title>
        <authorList>
            <person name="Baba T."/>
            <person name="Takeuchi F."/>
            <person name="Kuroda M."/>
            <person name="Yuzawa H."/>
            <person name="Aoki K."/>
            <person name="Oguchi A."/>
            <person name="Nagai Y."/>
            <person name="Iwama N."/>
            <person name="Asano K."/>
            <person name="Naimi T."/>
            <person name="Kuroda H."/>
            <person name="Cui L."/>
            <person name="Yamamoto K."/>
            <person name="Hiramatsu K."/>
        </authorList>
    </citation>
    <scope>NUCLEOTIDE SEQUENCE [LARGE SCALE GENOMIC DNA]</scope>
    <source>
        <strain>MW2</strain>
    </source>
</reference>
<gene>
    <name type="ordered locus">MW1230</name>
</gene>
<protein>
    <recommendedName>
        <fullName evidence="1">UPF0154 protein MW1230</fullName>
    </recommendedName>
</protein>
<accession>P67292</accession>
<accession>Q99UD3</accession>